<feature type="chain" id="PRO_1000094672" description="UDP-N-acetylglucosamine 1-carboxyvinyltransferase">
    <location>
        <begin position="1"/>
        <end position="431"/>
    </location>
</feature>
<feature type="active site" description="Proton donor" evidence="1">
    <location>
        <position position="126"/>
    </location>
</feature>
<feature type="binding site" evidence="1">
    <location>
        <begin position="22"/>
        <end position="23"/>
    </location>
    <ligand>
        <name>phosphoenolpyruvate</name>
        <dbReference type="ChEBI" id="CHEBI:58702"/>
    </ligand>
</feature>
<feature type="binding site" evidence="1">
    <location>
        <position position="102"/>
    </location>
    <ligand>
        <name>UDP-N-acetyl-alpha-D-glucosamine</name>
        <dbReference type="ChEBI" id="CHEBI:57705"/>
    </ligand>
</feature>
<feature type="binding site" evidence="1">
    <location>
        <begin position="131"/>
        <end position="135"/>
    </location>
    <ligand>
        <name>UDP-N-acetyl-alpha-D-glucosamine</name>
        <dbReference type="ChEBI" id="CHEBI:57705"/>
    </ligand>
</feature>
<feature type="binding site" evidence="1">
    <location>
        <position position="316"/>
    </location>
    <ligand>
        <name>UDP-N-acetyl-alpha-D-glucosamine</name>
        <dbReference type="ChEBI" id="CHEBI:57705"/>
    </ligand>
</feature>
<feature type="binding site" evidence="1">
    <location>
        <position position="338"/>
    </location>
    <ligand>
        <name>UDP-N-acetyl-alpha-D-glucosamine</name>
        <dbReference type="ChEBI" id="CHEBI:57705"/>
    </ligand>
</feature>
<feature type="modified residue" description="2-(S-cysteinyl)pyruvic acid O-phosphothioketal" evidence="1">
    <location>
        <position position="126"/>
    </location>
</feature>
<gene>
    <name evidence="1" type="primary">murA</name>
    <name type="ordered locus">Bind_2720</name>
</gene>
<name>MURA_BEII9</name>
<sequence length="431" mass="45392">MDRIRIVGGRTLEGTIKISGAKNAALPLMIASLLTSETLTLENVPALADVNMLLRILGHHGVDYSVNGRRAGEEPHASRAIHLTAGTIVDIMAPYDLVSKMRASFWVIAPLLARMGEARVSLPGGCAIGTRPVDLLLMVLEKLGAKIEIEAGYVHAKAPKGLHGAEITFPKVTVGGTHTALMAASLAQGHTLLVNAAREPEIVDLANCLTKMGAKIKGAGQSTVEIEGVGRLSGASHKVLPDRIEAGTYAIAVAMAGGDVLLEGAEADLLQTALDTIEQAGARISVTNEGIRVRRNGAGLQPVDVTTAPFPGFPTDLQAQFMALMTKAKGSSTITETIFENRFMHVQELARLGAHIRLEGDAAIVEGVETLQGAPVMATDLRASVSLVIAALAAQGETMVNRVYHLDRGFEHLEEKLGRCGAIIERISGTA</sequence>
<accession>B2IJH9</accession>
<comment type="function">
    <text evidence="1">Cell wall formation. Adds enolpyruvyl to UDP-N-acetylglucosamine.</text>
</comment>
<comment type="catalytic activity">
    <reaction evidence="1">
        <text>phosphoenolpyruvate + UDP-N-acetyl-alpha-D-glucosamine = UDP-N-acetyl-3-O-(1-carboxyvinyl)-alpha-D-glucosamine + phosphate</text>
        <dbReference type="Rhea" id="RHEA:18681"/>
        <dbReference type="ChEBI" id="CHEBI:43474"/>
        <dbReference type="ChEBI" id="CHEBI:57705"/>
        <dbReference type="ChEBI" id="CHEBI:58702"/>
        <dbReference type="ChEBI" id="CHEBI:68483"/>
        <dbReference type="EC" id="2.5.1.7"/>
    </reaction>
</comment>
<comment type="pathway">
    <text evidence="1">Cell wall biogenesis; peptidoglycan biosynthesis.</text>
</comment>
<comment type="subcellular location">
    <subcellularLocation>
        <location evidence="1">Cytoplasm</location>
    </subcellularLocation>
</comment>
<comment type="similarity">
    <text evidence="1">Belongs to the EPSP synthase family. MurA subfamily.</text>
</comment>
<dbReference type="EC" id="2.5.1.7" evidence="1"/>
<dbReference type="EMBL" id="CP001016">
    <property type="protein sequence ID" value="ACB96292.1"/>
    <property type="molecule type" value="Genomic_DNA"/>
</dbReference>
<dbReference type="RefSeq" id="WP_012385643.1">
    <property type="nucleotide sequence ID" value="NC_010581.1"/>
</dbReference>
<dbReference type="SMR" id="B2IJH9"/>
<dbReference type="STRING" id="395963.Bind_2720"/>
<dbReference type="KEGG" id="bid:Bind_2720"/>
<dbReference type="eggNOG" id="COG0766">
    <property type="taxonomic scope" value="Bacteria"/>
</dbReference>
<dbReference type="HOGENOM" id="CLU_027387_0_0_5"/>
<dbReference type="OrthoDB" id="9803760at2"/>
<dbReference type="UniPathway" id="UPA00219"/>
<dbReference type="Proteomes" id="UP000001695">
    <property type="component" value="Chromosome"/>
</dbReference>
<dbReference type="GO" id="GO:0005737">
    <property type="term" value="C:cytoplasm"/>
    <property type="evidence" value="ECO:0007669"/>
    <property type="project" value="UniProtKB-SubCell"/>
</dbReference>
<dbReference type="GO" id="GO:0008760">
    <property type="term" value="F:UDP-N-acetylglucosamine 1-carboxyvinyltransferase activity"/>
    <property type="evidence" value="ECO:0007669"/>
    <property type="project" value="UniProtKB-UniRule"/>
</dbReference>
<dbReference type="GO" id="GO:0051301">
    <property type="term" value="P:cell division"/>
    <property type="evidence" value="ECO:0007669"/>
    <property type="project" value="UniProtKB-KW"/>
</dbReference>
<dbReference type="GO" id="GO:0071555">
    <property type="term" value="P:cell wall organization"/>
    <property type="evidence" value="ECO:0007669"/>
    <property type="project" value="UniProtKB-KW"/>
</dbReference>
<dbReference type="GO" id="GO:0009252">
    <property type="term" value="P:peptidoglycan biosynthetic process"/>
    <property type="evidence" value="ECO:0007669"/>
    <property type="project" value="UniProtKB-UniRule"/>
</dbReference>
<dbReference type="GO" id="GO:0008360">
    <property type="term" value="P:regulation of cell shape"/>
    <property type="evidence" value="ECO:0007669"/>
    <property type="project" value="UniProtKB-KW"/>
</dbReference>
<dbReference type="GO" id="GO:0019277">
    <property type="term" value="P:UDP-N-acetylgalactosamine biosynthetic process"/>
    <property type="evidence" value="ECO:0007669"/>
    <property type="project" value="InterPro"/>
</dbReference>
<dbReference type="CDD" id="cd01555">
    <property type="entry name" value="UdpNAET"/>
    <property type="match status" value="1"/>
</dbReference>
<dbReference type="FunFam" id="3.65.10.10:FF:000001">
    <property type="entry name" value="UDP-N-acetylglucosamine 1-carboxyvinyltransferase"/>
    <property type="match status" value="1"/>
</dbReference>
<dbReference type="Gene3D" id="3.65.10.10">
    <property type="entry name" value="Enolpyruvate transferase domain"/>
    <property type="match status" value="2"/>
</dbReference>
<dbReference type="HAMAP" id="MF_00111">
    <property type="entry name" value="MurA"/>
    <property type="match status" value="1"/>
</dbReference>
<dbReference type="InterPro" id="IPR001986">
    <property type="entry name" value="Enolpyruvate_Tfrase_dom"/>
</dbReference>
<dbReference type="InterPro" id="IPR036968">
    <property type="entry name" value="Enolpyruvate_Tfrase_sf"/>
</dbReference>
<dbReference type="InterPro" id="IPR050068">
    <property type="entry name" value="MurA_subfamily"/>
</dbReference>
<dbReference type="InterPro" id="IPR013792">
    <property type="entry name" value="RNA3'P_cycl/enolpyr_Trfase_a/b"/>
</dbReference>
<dbReference type="InterPro" id="IPR005750">
    <property type="entry name" value="UDP_GlcNAc_COvinyl_MurA"/>
</dbReference>
<dbReference type="NCBIfam" id="TIGR01072">
    <property type="entry name" value="murA"/>
    <property type="match status" value="1"/>
</dbReference>
<dbReference type="NCBIfam" id="NF006873">
    <property type="entry name" value="PRK09369.1"/>
    <property type="match status" value="1"/>
</dbReference>
<dbReference type="PANTHER" id="PTHR43783">
    <property type="entry name" value="UDP-N-ACETYLGLUCOSAMINE 1-CARBOXYVINYLTRANSFERASE"/>
    <property type="match status" value="1"/>
</dbReference>
<dbReference type="PANTHER" id="PTHR43783:SF1">
    <property type="entry name" value="UDP-N-ACETYLGLUCOSAMINE 1-CARBOXYVINYLTRANSFERASE"/>
    <property type="match status" value="1"/>
</dbReference>
<dbReference type="Pfam" id="PF00275">
    <property type="entry name" value="EPSP_synthase"/>
    <property type="match status" value="1"/>
</dbReference>
<dbReference type="SUPFAM" id="SSF55205">
    <property type="entry name" value="EPT/RTPC-like"/>
    <property type="match status" value="1"/>
</dbReference>
<keyword id="KW-0131">Cell cycle</keyword>
<keyword id="KW-0132">Cell division</keyword>
<keyword id="KW-0133">Cell shape</keyword>
<keyword id="KW-0961">Cell wall biogenesis/degradation</keyword>
<keyword id="KW-0963">Cytoplasm</keyword>
<keyword id="KW-0573">Peptidoglycan synthesis</keyword>
<keyword id="KW-0670">Pyruvate</keyword>
<keyword id="KW-1185">Reference proteome</keyword>
<keyword id="KW-0808">Transferase</keyword>
<protein>
    <recommendedName>
        <fullName evidence="1">UDP-N-acetylglucosamine 1-carboxyvinyltransferase</fullName>
        <ecNumber evidence="1">2.5.1.7</ecNumber>
    </recommendedName>
    <alternativeName>
        <fullName evidence="1">Enoylpyruvate transferase</fullName>
    </alternativeName>
    <alternativeName>
        <fullName evidence="1">UDP-N-acetylglucosamine enolpyruvyl transferase</fullName>
        <shortName evidence="1">EPT</shortName>
    </alternativeName>
</protein>
<evidence type="ECO:0000255" key="1">
    <source>
        <dbReference type="HAMAP-Rule" id="MF_00111"/>
    </source>
</evidence>
<reference key="1">
    <citation type="journal article" date="2010" name="J. Bacteriol.">
        <title>Complete genome sequence of Beijerinckia indica subsp. indica.</title>
        <authorList>
            <person name="Tamas I."/>
            <person name="Dedysh S.N."/>
            <person name="Liesack W."/>
            <person name="Stott M.B."/>
            <person name="Alam M."/>
            <person name="Murrell J.C."/>
            <person name="Dunfield P.F."/>
        </authorList>
    </citation>
    <scope>NUCLEOTIDE SEQUENCE [LARGE SCALE GENOMIC DNA]</scope>
    <source>
        <strain>ATCC 9039 / DSM 1715 / NCIMB 8712</strain>
    </source>
</reference>
<organism>
    <name type="scientific">Beijerinckia indica subsp. indica (strain ATCC 9039 / DSM 1715 / NCIMB 8712)</name>
    <dbReference type="NCBI Taxonomy" id="395963"/>
    <lineage>
        <taxon>Bacteria</taxon>
        <taxon>Pseudomonadati</taxon>
        <taxon>Pseudomonadota</taxon>
        <taxon>Alphaproteobacteria</taxon>
        <taxon>Hyphomicrobiales</taxon>
        <taxon>Beijerinckiaceae</taxon>
        <taxon>Beijerinckia</taxon>
    </lineage>
</organism>
<proteinExistence type="inferred from homology"/>